<accession>Q6IM91</accession>
<organism>
    <name type="scientific">Arabidopsis thaliana</name>
    <name type="common">Mouse-ear cress</name>
    <dbReference type="NCBI Taxonomy" id="3702"/>
    <lineage>
        <taxon>Eukaryota</taxon>
        <taxon>Viridiplantae</taxon>
        <taxon>Streptophyta</taxon>
        <taxon>Embryophyta</taxon>
        <taxon>Tracheophyta</taxon>
        <taxon>Spermatophyta</taxon>
        <taxon>Magnoliopsida</taxon>
        <taxon>eudicotyledons</taxon>
        <taxon>Gunneridae</taxon>
        <taxon>Pentapetalae</taxon>
        <taxon>rosids</taxon>
        <taxon>malvids</taxon>
        <taxon>Brassicales</taxon>
        <taxon>Brassicaceae</taxon>
        <taxon>Camelineae</taxon>
        <taxon>Arabidopsis</taxon>
    </lineage>
</organism>
<sequence length="55" mass="6560">MCLFMSNSSLPTKPNRKTRFGDRCLLMAKQQRTRLYILRRCVSMLLCWHDHSISD</sequence>
<gene>
    <name evidence="5" type="primary">DVL10</name>
    <name evidence="6" type="synonym">RTFL12</name>
    <name evidence="8" type="ordered locus">At4g13395</name>
    <name evidence="9" type="ORF">T9E8</name>
</gene>
<evidence type="ECO:0000250" key="1">
    <source>
        <dbReference type="UniProtKB" id="Q6X5V0"/>
    </source>
</evidence>
<evidence type="ECO:0000250" key="2">
    <source>
        <dbReference type="UniProtKB" id="Q7XXN8"/>
    </source>
</evidence>
<evidence type="ECO:0000255" key="3"/>
<evidence type="ECO:0000255" key="4">
    <source>
        <dbReference type="PROSITE-ProRule" id="PRU00498"/>
    </source>
</evidence>
<evidence type="ECO:0000303" key="5">
    <source>
    </source>
</evidence>
<evidence type="ECO:0000303" key="6">
    <source>
    </source>
</evidence>
<evidence type="ECO:0000305" key="7"/>
<evidence type="ECO:0000312" key="8">
    <source>
        <dbReference type="Araport" id="AT4G13395"/>
    </source>
</evidence>
<evidence type="ECO:0000312" key="9">
    <source>
        <dbReference type="EMBL" id="AL049608"/>
    </source>
</evidence>
<keyword id="KW-1003">Cell membrane</keyword>
<keyword id="KW-0217">Developmental protein</keyword>
<keyword id="KW-0325">Glycoprotein</keyword>
<keyword id="KW-0472">Membrane</keyword>
<keyword id="KW-1185">Reference proteome</keyword>
<keyword id="KW-0812">Transmembrane</keyword>
<keyword id="KW-1133">Transmembrane helix</keyword>
<name>DVL10_ARATH</name>
<reference key="1">
    <citation type="journal article" date="2004" name="Plant J.">
        <title>DVL, a novel class of small polypeptides: overexpression alters Arabidopsis development.</title>
        <authorList>
            <person name="Wen J."/>
            <person name="Lease K.A."/>
            <person name="Walker J.C."/>
        </authorList>
    </citation>
    <scope>NUCLEOTIDE SEQUENCE [MRNA]</scope>
    <scope>GENE FAMILY</scope>
    <scope>NOMENCLATURE</scope>
    <source>
        <strain>cv. Columbia</strain>
    </source>
</reference>
<reference key="2">
    <citation type="journal article" date="1999" name="Nature">
        <title>Sequence and analysis of chromosome 4 of the plant Arabidopsis thaliana.</title>
        <authorList>
            <person name="Mayer K.F.X."/>
            <person name="Schueller C."/>
            <person name="Wambutt R."/>
            <person name="Murphy G."/>
            <person name="Volckaert G."/>
            <person name="Pohl T."/>
            <person name="Duesterhoeft A."/>
            <person name="Stiekema W."/>
            <person name="Entian K.-D."/>
            <person name="Terryn N."/>
            <person name="Harris B."/>
            <person name="Ansorge W."/>
            <person name="Brandt P."/>
            <person name="Grivell L.A."/>
            <person name="Rieger M."/>
            <person name="Weichselgartner M."/>
            <person name="de Simone V."/>
            <person name="Obermaier B."/>
            <person name="Mache R."/>
            <person name="Mueller M."/>
            <person name="Kreis M."/>
            <person name="Delseny M."/>
            <person name="Puigdomenech P."/>
            <person name="Watson M."/>
            <person name="Schmidtheini T."/>
            <person name="Reichert B."/>
            <person name="Portetelle D."/>
            <person name="Perez-Alonso M."/>
            <person name="Boutry M."/>
            <person name="Bancroft I."/>
            <person name="Vos P."/>
            <person name="Hoheisel J."/>
            <person name="Zimmermann W."/>
            <person name="Wedler H."/>
            <person name="Ridley P."/>
            <person name="Langham S.-A."/>
            <person name="McCullagh B."/>
            <person name="Bilham L."/>
            <person name="Robben J."/>
            <person name="van der Schueren J."/>
            <person name="Grymonprez B."/>
            <person name="Chuang Y.-J."/>
            <person name="Vandenbussche F."/>
            <person name="Braeken M."/>
            <person name="Weltjens I."/>
            <person name="Voet M."/>
            <person name="Bastiaens I."/>
            <person name="Aert R."/>
            <person name="Defoor E."/>
            <person name="Weitzenegger T."/>
            <person name="Bothe G."/>
            <person name="Ramsperger U."/>
            <person name="Hilbert H."/>
            <person name="Braun M."/>
            <person name="Holzer E."/>
            <person name="Brandt A."/>
            <person name="Peters S."/>
            <person name="van Staveren M."/>
            <person name="Dirkse W."/>
            <person name="Mooijman P."/>
            <person name="Klein Lankhorst R."/>
            <person name="Rose M."/>
            <person name="Hauf J."/>
            <person name="Koetter P."/>
            <person name="Berneiser S."/>
            <person name="Hempel S."/>
            <person name="Feldpausch M."/>
            <person name="Lamberth S."/>
            <person name="Van den Daele H."/>
            <person name="De Keyser A."/>
            <person name="Buysshaert C."/>
            <person name="Gielen J."/>
            <person name="Villarroel R."/>
            <person name="De Clercq R."/>
            <person name="van Montagu M."/>
            <person name="Rogers J."/>
            <person name="Cronin A."/>
            <person name="Quail M.A."/>
            <person name="Bray-Allen S."/>
            <person name="Clark L."/>
            <person name="Doggett J."/>
            <person name="Hall S."/>
            <person name="Kay M."/>
            <person name="Lennard N."/>
            <person name="McLay K."/>
            <person name="Mayes R."/>
            <person name="Pettett A."/>
            <person name="Rajandream M.A."/>
            <person name="Lyne M."/>
            <person name="Benes V."/>
            <person name="Rechmann S."/>
            <person name="Borkova D."/>
            <person name="Bloecker H."/>
            <person name="Scharfe M."/>
            <person name="Grimm M."/>
            <person name="Loehnert T.-H."/>
            <person name="Dose S."/>
            <person name="de Haan M."/>
            <person name="Maarse A.C."/>
            <person name="Schaefer M."/>
            <person name="Mueller-Auer S."/>
            <person name="Gabel C."/>
            <person name="Fuchs M."/>
            <person name="Fartmann B."/>
            <person name="Granderath K."/>
            <person name="Dauner D."/>
            <person name="Herzl A."/>
            <person name="Neumann S."/>
            <person name="Argiriou A."/>
            <person name="Vitale D."/>
            <person name="Liguori R."/>
            <person name="Piravandi E."/>
            <person name="Massenet O."/>
            <person name="Quigley F."/>
            <person name="Clabauld G."/>
            <person name="Muendlein A."/>
            <person name="Felber R."/>
            <person name="Schnabl S."/>
            <person name="Hiller R."/>
            <person name="Schmidt W."/>
            <person name="Lecharny A."/>
            <person name="Aubourg S."/>
            <person name="Chefdor F."/>
            <person name="Cooke R."/>
            <person name="Berger C."/>
            <person name="Monfort A."/>
            <person name="Casacuberta E."/>
            <person name="Gibbons T."/>
            <person name="Weber N."/>
            <person name="Vandenbol M."/>
            <person name="Bargues M."/>
            <person name="Terol J."/>
            <person name="Torres A."/>
            <person name="Perez-Perez A."/>
            <person name="Purnelle B."/>
            <person name="Bent E."/>
            <person name="Johnson S."/>
            <person name="Tacon D."/>
            <person name="Jesse T."/>
            <person name="Heijnen L."/>
            <person name="Schwarz S."/>
            <person name="Scholler P."/>
            <person name="Heber S."/>
            <person name="Francs P."/>
            <person name="Bielke C."/>
            <person name="Frishman D."/>
            <person name="Haase D."/>
            <person name="Lemcke K."/>
            <person name="Mewes H.-W."/>
            <person name="Stocker S."/>
            <person name="Zaccaria P."/>
            <person name="Bevan M."/>
            <person name="Wilson R.K."/>
            <person name="de la Bastide M."/>
            <person name="Habermann K."/>
            <person name="Parnell L."/>
            <person name="Dedhia N."/>
            <person name="Gnoj L."/>
            <person name="Schutz K."/>
            <person name="Huang E."/>
            <person name="Spiegel L."/>
            <person name="Sekhon M."/>
            <person name="Murray J."/>
            <person name="Sheet P."/>
            <person name="Cordes M."/>
            <person name="Abu-Threideh J."/>
            <person name="Stoneking T."/>
            <person name="Kalicki J."/>
            <person name="Graves T."/>
            <person name="Harmon G."/>
            <person name="Edwards J."/>
            <person name="Latreille P."/>
            <person name="Courtney L."/>
            <person name="Cloud J."/>
            <person name="Abbott A."/>
            <person name="Scott K."/>
            <person name="Johnson D."/>
            <person name="Minx P."/>
            <person name="Bentley D."/>
            <person name="Fulton B."/>
            <person name="Miller N."/>
            <person name="Greco T."/>
            <person name="Kemp K."/>
            <person name="Kramer J."/>
            <person name="Fulton L."/>
            <person name="Mardis E."/>
            <person name="Dante M."/>
            <person name="Pepin K."/>
            <person name="Hillier L.W."/>
            <person name="Nelson J."/>
            <person name="Spieth J."/>
            <person name="Ryan E."/>
            <person name="Andrews S."/>
            <person name="Geisel C."/>
            <person name="Layman D."/>
            <person name="Du H."/>
            <person name="Ali J."/>
            <person name="Berghoff A."/>
            <person name="Jones K."/>
            <person name="Drone K."/>
            <person name="Cotton M."/>
            <person name="Joshu C."/>
            <person name="Antonoiu B."/>
            <person name="Zidanic M."/>
            <person name="Strong C."/>
            <person name="Sun H."/>
            <person name="Lamar B."/>
            <person name="Yordan C."/>
            <person name="Ma P."/>
            <person name="Zhong J."/>
            <person name="Preston R."/>
            <person name="Vil D."/>
            <person name="Shekher M."/>
            <person name="Matero A."/>
            <person name="Shah R."/>
            <person name="Swaby I.K."/>
            <person name="O'Shaughnessy A."/>
            <person name="Rodriguez M."/>
            <person name="Hoffman J."/>
            <person name="Till S."/>
            <person name="Granat S."/>
            <person name="Shohdy N."/>
            <person name="Hasegawa A."/>
            <person name="Hameed A."/>
            <person name="Lodhi M."/>
            <person name="Johnson A."/>
            <person name="Chen E."/>
            <person name="Marra M.A."/>
            <person name="Martienssen R."/>
            <person name="McCombie W.R."/>
        </authorList>
    </citation>
    <scope>NUCLEOTIDE SEQUENCE [LARGE SCALE GENOMIC DNA]</scope>
    <source>
        <strain>cv. Columbia</strain>
    </source>
</reference>
<reference key="3">
    <citation type="journal article" date="2017" name="Plant J.">
        <title>Araport11: a complete reannotation of the Arabidopsis thaliana reference genome.</title>
        <authorList>
            <person name="Cheng C.Y."/>
            <person name="Krishnakumar V."/>
            <person name="Chan A.P."/>
            <person name="Thibaud-Nissen F."/>
            <person name="Schobel S."/>
            <person name="Town C.D."/>
        </authorList>
    </citation>
    <scope>GENOME REANNOTATION</scope>
    <source>
        <strain>cv. Columbia</strain>
    </source>
</reference>
<reference key="4">
    <citation type="journal article" date="2004" name="Plant J.">
        <title>Overexpression of a novel small peptide ROTUNDIFOLIA4 decreases cell proliferation and alters leaf shape in Arabidopsis thaliana.</title>
        <authorList>
            <person name="Narita N.N."/>
            <person name="Moore S."/>
            <person name="Horiguchi G."/>
            <person name="Kubo M."/>
            <person name="Demura T."/>
            <person name="Fukuda H."/>
            <person name="Goodrich J."/>
            <person name="Tsukaya H."/>
        </authorList>
    </citation>
    <scope>GENE FAMILY</scope>
    <source>
        <strain>cv. Columbia</strain>
        <strain>cv. Landsberg erecta</strain>
    </source>
</reference>
<reference key="5">
    <citation type="journal article" date="2015" name="J. Plant Res.">
        <title>Comparative analysis of the RTFL peptide family on the control of plant organogenesis.</title>
        <authorList>
            <person name="Guo P."/>
            <person name="Yoshimura A."/>
            <person name="Ishikawa N."/>
            <person name="Yamaguchi T."/>
            <person name="Guo Y."/>
            <person name="Tsukaya H."/>
        </authorList>
    </citation>
    <scope>REVIEW</scope>
    <scope>GENE FAMILY</scope>
    <scope>NOMENCLATURE</scope>
    <source>
        <strain>cv. Columbia</strain>
    </source>
</reference>
<feature type="chain" id="PRO_0000452778" description="Small polypeptide DEVIL 10">
    <location>
        <begin position="1"/>
        <end position="55"/>
    </location>
</feature>
<feature type="transmembrane region" description="Helical" evidence="3">
    <location>
        <begin position="32"/>
        <end position="48"/>
    </location>
</feature>
<feature type="region of interest" description="Required for DVL/RTFL small polypeptide activity" evidence="2">
    <location>
        <begin position="19"/>
        <end position="50"/>
    </location>
</feature>
<feature type="glycosylation site" description="N-linked (GlcNAc...) asparagine" evidence="4">
    <location>
        <position position="7"/>
    </location>
</feature>
<dbReference type="EMBL" id="BK001753">
    <property type="protein sequence ID" value="DAA02281.1"/>
    <property type="molecule type" value="mRNA"/>
</dbReference>
<dbReference type="EMBL" id="AL049608">
    <property type="status" value="NOT_ANNOTATED_CDS"/>
    <property type="molecule type" value="Genomic_DNA"/>
</dbReference>
<dbReference type="EMBL" id="CP002687">
    <property type="protein sequence ID" value="AEE83274.1"/>
    <property type="molecule type" value="Genomic_DNA"/>
</dbReference>
<dbReference type="RefSeq" id="NP_001078384.1">
    <property type="nucleotide sequence ID" value="NM_001084915.2"/>
</dbReference>
<dbReference type="STRING" id="3702.Q6IM91"/>
<dbReference type="GlyCosmos" id="Q6IM91">
    <property type="glycosylation" value="1 site, No reported glycans"/>
</dbReference>
<dbReference type="GlyGen" id="Q6IM91">
    <property type="glycosylation" value="1 site"/>
</dbReference>
<dbReference type="PaxDb" id="3702-AT4G13395.1"/>
<dbReference type="EnsemblPlants" id="AT4G13395.1">
    <property type="protein sequence ID" value="AT4G13395.1"/>
    <property type="gene ID" value="AT4G13395"/>
</dbReference>
<dbReference type="GeneID" id="5008138"/>
<dbReference type="Gramene" id="AT4G13395.1">
    <property type="protein sequence ID" value="AT4G13395.1"/>
    <property type="gene ID" value="AT4G13395"/>
</dbReference>
<dbReference type="KEGG" id="ath:AT4G13395"/>
<dbReference type="Araport" id="AT4G13395"/>
<dbReference type="TAIR" id="AT4G13395">
    <property type="gene designation" value="RTFL12"/>
</dbReference>
<dbReference type="eggNOG" id="ENOG502SCQN">
    <property type="taxonomic scope" value="Eukaryota"/>
</dbReference>
<dbReference type="HOGENOM" id="CLU_150897_4_1_1"/>
<dbReference type="InParanoid" id="Q6IM91"/>
<dbReference type="OMA" id="LCWHAHS"/>
<dbReference type="OrthoDB" id="1693826at2759"/>
<dbReference type="PhylomeDB" id="Q6IM91"/>
<dbReference type="PRO" id="PR:Q6IM91"/>
<dbReference type="Proteomes" id="UP000006548">
    <property type="component" value="Chromosome 4"/>
</dbReference>
<dbReference type="ExpressionAtlas" id="Q6IM91">
    <property type="expression patterns" value="baseline and differential"/>
</dbReference>
<dbReference type="GO" id="GO:0005886">
    <property type="term" value="C:plasma membrane"/>
    <property type="evidence" value="ECO:0000250"/>
    <property type="project" value="UniProtKB"/>
</dbReference>
<dbReference type="GO" id="GO:0071456">
    <property type="term" value="P:cellular response to hypoxia"/>
    <property type="evidence" value="ECO:0007007"/>
    <property type="project" value="TAIR"/>
</dbReference>
<dbReference type="GO" id="GO:0008285">
    <property type="term" value="P:negative regulation of cell population proliferation"/>
    <property type="evidence" value="ECO:0000250"/>
    <property type="project" value="UniProtKB"/>
</dbReference>
<dbReference type="GO" id="GO:0048367">
    <property type="term" value="P:shoot system development"/>
    <property type="evidence" value="ECO:0000250"/>
    <property type="project" value="TAIR"/>
</dbReference>
<dbReference type="InterPro" id="IPR012552">
    <property type="entry name" value="DVL"/>
</dbReference>
<dbReference type="InterPro" id="IPR051525">
    <property type="entry name" value="DVL_RTFL_regulatory"/>
</dbReference>
<dbReference type="PANTHER" id="PTHR33102">
    <property type="entry name" value="DVL19-RELATED-RELATED"/>
    <property type="match status" value="1"/>
</dbReference>
<dbReference type="Pfam" id="PF08137">
    <property type="entry name" value="DVL"/>
    <property type="match status" value="1"/>
</dbReference>
<comment type="function">
    <text evidence="1">Small polypeptide acting as a regulatory molecule which coordinates cellular responses required for differentiation, growth and development, probably by restricting polar cell proliferation in lateral organs and coordinating socket cell recruitment and differentiation at trichome sites.</text>
</comment>
<comment type="subcellular location">
    <subcellularLocation>
        <location evidence="2">Cell membrane</location>
        <topology evidence="3">Single-pass membrane protein</topology>
    </subcellularLocation>
</comment>
<comment type="similarity">
    <text evidence="7">Belongs to the DVL/RTFL small polypeptides family.</text>
</comment>
<proteinExistence type="inferred from homology"/>
<protein>
    <recommendedName>
        <fullName evidence="5">Small polypeptide DEVIL 10</fullName>
    </recommendedName>
    <alternativeName>
        <fullName evidence="6">Small polypeptide ROTUNDIFOLIA LIKE 12</fullName>
        <shortName evidence="6">Small polypeptide ROT-FOUR-LIKE 12</shortName>
    </alternativeName>
</protein>